<accession>Q6FRU5</accession>
<organism>
    <name type="scientific">Candida glabrata (strain ATCC 2001 / BCRC 20586 / JCM 3761 / NBRC 0622 / NRRL Y-65 / CBS 138)</name>
    <name type="common">Yeast</name>
    <name type="synonym">Nakaseomyces glabratus</name>
    <dbReference type="NCBI Taxonomy" id="284593"/>
    <lineage>
        <taxon>Eukaryota</taxon>
        <taxon>Fungi</taxon>
        <taxon>Dikarya</taxon>
        <taxon>Ascomycota</taxon>
        <taxon>Saccharomycotina</taxon>
        <taxon>Saccharomycetes</taxon>
        <taxon>Saccharomycetales</taxon>
        <taxon>Saccharomycetaceae</taxon>
        <taxon>Nakaseomyces</taxon>
    </lineage>
</organism>
<gene>
    <name evidence="1" type="primary">INA17</name>
    <name type="ordered locus">CAGL0H05819g</name>
</gene>
<dbReference type="EMBL" id="CR380954">
    <property type="protein sequence ID" value="CAG59982.1"/>
    <property type="molecule type" value="Genomic_DNA"/>
</dbReference>
<dbReference type="RefSeq" id="XP_447049.1">
    <property type="nucleotide sequence ID" value="XM_447049.1"/>
</dbReference>
<dbReference type="FunCoup" id="Q6FRU5">
    <property type="interactions" value="55"/>
</dbReference>
<dbReference type="EnsemblFungi" id="CAGL0H05819g-T">
    <property type="protein sequence ID" value="CAGL0H05819g-T-p1"/>
    <property type="gene ID" value="CAGL0H05819g"/>
</dbReference>
<dbReference type="KEGG" id="cgr:2888642"/>
<dbReference type="CGD" id="CAL0131788">
    <property type="gene designation" value="CAGL0H05819g"/>
</dbReference>
<dbReference type="VEuPathDB" id="FungiDB:CAGL0H05819g"/>
<dbReference type="eggNOG" id="ENOG502S3U1">
    <property type="taxonomic scope" value="Eukaryota"/>
</dbReference>
<dbReference type="HOGENOM" id="CLU_127263_1_0_1"/>
<dbReference type="InParanoid" id="Q6FRU5"/>
<dbReference type="OMA" id="HYVWWKL"/>
<dbReference type="Proteomes" id="UP000002428">
    <property type="component" value="Chromosome H"/>
</dbReference>
<dbReference type="GO" id="GO:1990524">
    <property type="term" value="C:INA complex"/>
    <property type="evidence" value="ECO:0007669"/>
    <property type="project" value="EnsemblFungi"/>
</dbReference>
<dbReference type="GO" id="GO:1990677">
    <property type="term" value="C:mitochondrial inner membrane assembly complex"/>
    <property type="evidence" value="ECO:0007669"/>
    <property type="project" value="EnsemblFungi"/>
</dbReference>
<dbReference type="GO" id="GO:0033615">
    <property type="term" value="P:mitochondrial proton-transporting ATP synthase complex assembly"/>
    <property type="evidence" value="ECO:0007669"/>
    <property type="project" value="EnsemblFungi"/>
</dbReference>
<keyword id="KW-0143">Chaperone</keyword>
<keyword id="KW-0175">Coiled coil</keyword>
<keyword id="KW-0472">Membrane</keyword>
<keyword id="KW-0496">Mitochondrion</keyword>
<keyword id="KW-0999">Mitochondrion inner membrane</keyword>
<keyword id="KW-1185">Reference proteome</keyword>
<keyword id="KW-0809">Transit peptide</keyword>
<keyword id="KW-0812">Transmembrane</keyword>
<keyword id="KW-1133">Transmembrane helix</keyword>
<proteinExistence type="inferred from homology"/>
<protein>
    <recommendedName>
        <fullName evidence="1">Inner membrane assembly complex subunit 17</fullName>
    </recommendedName>
</protein>
<sequence length="164" mass="19359">MIKTAKISTLRLAITRNARNLSFTTLVRSPEVDNSKIKTLEDLTRLETLEGVDPELIKRLINEKTQEFNTQDELKLLKSMQMEQDRLNEVPLKRFTRPLWIFILMASTFYLGAHLVWWKLAYEKKEVELKHKVDSLETTLKDVMKEKATGPTPCNNKKSWYKFW</sequence>
<name>INA17_CANGA</name>
<comment type="function">
    <text evidence="1">Component of the INA complex (INAC) that promotes the biogenesis of mitochondrial F(1)F(0)-ATP synthase. INAC facilitates the assembly of the peripheral stalk and promotes the assembly of the catalytic F(1)-domain with the membrane-embedded F(0)-domain.</text>
</comment>
<comment type="subunit">
    <text evidence="1">Component of the inner membrane assembly (INA) complex, composed of INA17 and INA22. Interacts with a subset of F(1)F(0)-ATP synthase subunits of the F(1)-domain and the peripheral stalk.</text>
</comment>
<comment type="subcellular location">
    <subcellularLocation>
        <location evidence="1">Mitochondrion inner membrane</location>
        <topology evidence="2">Single-pass membrane protein</topology>
    </subcellularLocation>
</comment>
<comment type="similarity">
    <text evidence="3">Belongs to the INA17 family.</text>
</comment>
<evidence type="ECO:0000250" key="1">
    <source>
        <dbReference type="UniProtKB" id="Q02888"/>
    </source>
</evidence>
<evidence type="ECO:0000255" key="2"/>
<evidence type="ECO:0000305" key="3"/>
<feature type="transit peptide" description="Mitochondrion" evidence="2">
    <location>
        <begin position="1"/>
        <end position="28"/>
    </location>
</feature>
<feature type="chain" id="PRO_0000399878" description="Inner membrane assembly complex subunit 17" evidence="2">
    <location>
        <begin position="29"/>
        <end position="164"/>
    </location>
</feature>
<feature type="topological domain" description="Mitochondrial matrix" evidence="1">
    <location>
        <begin position="29"/>
        <end position="97"/>
    </location>
</feature>
<feature type="transmembrane region" description="Helical" evidence="2">
    <location>
        <begin position="98"/>
        <end position="118"/>
    </location>
</feature>
<feature type="topological domain" description="Mitochondrial intermembrane" evidence="1">
    <location>
        <begin position="119"/>
        <end position="164"/>
    </location>
</feature>
<feature type="coiled-coil region" evidence="2">
    <location>
        <begin position="121"/>
        <end position="149"/>
    </location>
</feature>
<reference key="1">
    <citation type="journal article" date="2004" name="Nature">
        <title>Genome evolution in yeasts.</title>
        <authorList>
            <person name="Dujon B."/>
            <person name="Sherman D."/>
            <person name="Fischer G."/>
            <person name="Durrens P."/>
            <person name="Casaregola S."/>
            <person name="Lafontaine I."/>
            <person name="de Montigny J."/>
            <person name="Marck C."/>
            <person name="Neuveglise C."/>
            <person name="Talla E."/>
            <person name="Goffard N."/>
            <person name="Frangeul L."/>
            <person name="Aigle M."/>
            <person name="Anthouard V."/>
            <person name="Babour A."/>
            <person name="Barbe V."/>
            <person name="Barnay S."/>
            <person name="Blanchin S."/>
            <person name="Beckerich J.-M."/>
            <person name="Beyne E."/>
            <person name="Bleykasten C."/>
            <person name="Boisrame A."/>
            <person name="Boyer J."/>
            <person name="Cattolico L."/>
            <person name="Confanioleri F."/>
            <person name="de Daruvar A."/>
            <person name="Despons L."/>
            <person name="Fabre E."/>
            <person name="Fairhead C."/>
            <person name="Ferry-Dumazet H."/>
            <person name="Groppi A."/>
            <person name="Hantraye F."/>
            <person name="Hennequin C."/>
            <person name="Jauniaux N."/>
            <person name="Joyet P."/>
            <person name="Kachouri R."/>
            <person name="Kerrest A."/>
            <person name="Koszul R."/>
            <person name="Lemaire M."/>
            <person name="Lesur I."/>
            <person name="Ma L."/>
            <person name="Muller H."/>
            <person name="Nicaud J.-M."/>
            <person name="Nikolski M."/>
            <person name="Oztas S."/>
            <person name="Ozier-Kalogeropoulos O."/>
            <person name="Pellenz S."/>
            <person name="Potier S."/>
            <person name="Richard G.-F."/>
            <person name="Straub M.-L."/>
            <person name="Suleau A."/>
            <person name="Swennen D."/>
            <person name="Tekaia F."/>
            <person name="Wesolowski-Louvel M."/>
            <person name="Westhof E."/>
            <person name="Wirth B."/>
            <person name="Zeniou-Meyer M."/>
            <person name="Zivanovic Y."/>
            <person name="Bolotin-Fukuhara M."/>
            <person name="Thierry A."/>
            <person name="Bouchier C."/>
            <person name="Caudron B."/>
            <person name="Scarpelli C."/>
            <person name="Gaillardin C."/>
            <person name="Weissenbach J."/>
            <person name="Wincker P."/>
            <person name="Souciet J.-L."/>
        </authorList>
    </citation>
    <scope>NUCLEOTIDE SEQUENCE [LARGE SCALE GENOMIC DNA]</scope>
    <source>
        <strain>ATCC 2001 / BCRC 20586 / JCM 3761 / NBRC 0622 / NRRL Y-65 / CBS 138</strain>
    </source>
</reference>